<name>ISPG_RHIR8</name>
<organism>
    <name type="scientific">Rhizobium rhizogenes (strain K84 / ATCC BAA-868)</name>
    <name type="common">Agrobacterium radiobacter</name>
    <dbReference type="NCBI Taxonomy" id="311403"/>
    <lineage>
        <taxon>Bacteria</taxon>
        <taxon>Pseudomonadati</taxon>
        <taxon>Pseudomonadota</taxon>
        <taxon>Alphaproteobacteria</taxon>
        <taxon>Hyphomicrobiales</taxon>
        <taxon>Rhizobiaceae</taxon>
        <taxon>Rhizobium/Agrobacterium group</taxon>
        <taxon>Rhizobium</taxon>
    </lineage>
</organism>
<gene>
    <name evidence="1" type="primary">ispG</name>
    <name type="ordered locus">Arad_4692</name>
</gene>
<comment type="function">
    <text evidence="1">Converts 2C-methyl-D-erythritol 2,4-cyclodiphosphate (ME-2,4cPP) into 1-hydroxy-2-methyl-2-(E)-butenyl 4-diphosphate.</text>
</comment>
<comment type="catalytic activity">
    <reaction evidence="1">
        <text>(2E)-4-hydroxy-3-methylbut-2-enyl diphosphate + oxidized [flavodoxin] + H2O + 2 H(+) = 2-C-methyl-D-erythritol 2,4-cyclic diphosphate + reduced [flavodoxin]</text>
        <dbReference type="Rhea" id="RHEA:43604"/>
        <dbReference type="Rhea" id="RHEA-COMP:10622"/>
        <dbReference type="Rhea" id="RHEA-COMP:10623"/>
        <dbReference type="ChEBI" id="CHEBI:15377"/>
        <dbReference type="ChEBI" id="CHEBI:15378"/>
        <dbReference type="ChEBI" id="CHEBI:57618"/>
        <dbReference type="ChEBI" id="CHEBI:58210"/>
        <dbReference type="ChEBI" id="CHEBI:58483"/>
        <dbReference type="ChEBI" id="CHEBI:128753"/>
        <dbReference type="EC" id="1.17.7.3"/>
    </reaction>
</comment>
<comment type="cofactor">
    <cofactor evidence="1">
        <name>[4Fe-4S] cluster</name>
        <dbReference type="ChEBI" id="CHEBI:49883"/>
    </cofactor>
    <text evidence="1">Binds 1 [4Fe-4S] cluster.</text>
</comment>
<comment type="pathway">
    <text evidence="1">Isoprenoid biosynthesis; isopentenyl diphosphate biosynthesis via DXP pathway; isopentenyl diphosphate from 1-deoxy-D-xylulose 5-phosphate: step 5/6.</text>
</comment>
<comment type="similarity">
    <text evidence="1">Belongs to the IspG family.</text>
</comment>
<reference key="1">
    <citation type="journal article" date="2009" name="J. Bacteriol.">
        <title>Genome sequences of three Agrobacterium biovars help elucidate the evolution of multichromosome genomes in bacteria.</title>
        <authorList>
            <person name="Slater S.C."/>
            <person name="Goldman B.S."/>
            <person name="Goodner B."/>
            <person name="Setubal J.C."/>
            <person name="Farrand S.K."/>
            <person name="Nester E.W."/>
            <person name="Burr T.J."/>
            <person name="Banta L."/>
            <person name="Dickerman A.W."/>
            <person name="Paulsen I."/>
            <person name="Otten L."/>
            <person name="Suen G."/>
            <person name="Welch R."/>
            <person name="Almeida N.F."/>
            <person name="Arnold F."/>
            <person name="Burton O.T."/>
            <person name="Du Z."/>
            <person name="Ewing A."/>
            <person name="Godsy E."/>
            <person name="Heisel S."/>
            <person name="Houmiel K.L."/>
            <person name="Jhaveri J."/>
            <person name="Lu J."/>
            <person name="Miller N.M."/>
            <person name="Norton S."/>
            <person name="Chen Q."/>
            <person name="Phoolcharoen W."/>
            <person name="Ohlin V."/>
            <person name="Ondrusek D."/>
            <person name="Pride N."/>
            <person name="Stricklin S.L."/>
            <person name="Sun J."/>
            <person name="Wheeler C."/>
            <person name="Wilson L."/>
            <person name="Zhu H."/>
            <person name="Wood D.W."/>
        </authorList>
    </citation>
    <scope>NUCLEOTIDE SEQUENCE [LARGE SCALE GENOMIC DNA]</scope>
    <source>
        <strain>K84 / ATCC BAA-868</strain>
    </source>
</reference>
<sequence length="417" mass="44525">MSSATDFDPKPRRSSVAVDVGGVIVGGGAPVVVQSMTNTDTADIDSTVAQVAALFKAGSELVRITVDRDESAAAVPKIRERLLRLGMDVPLIGDFHYIGHKLLADHPACAEALAKYRINPGNVGFKDKKDKQFAEIIEMAIRYDKPVRIGVNWGSLDQDLLTALMDQNSAAGSPLSARQVTRETIVQSALISADLAEEIGLPRNRIILSAKVSQVQDLIAVYSMLSERSNHALHLGLTEAGMGSKGIVASSAAMGYVLQHGIGDTVRVSLTPEPNGDRTREVQVAQELLQVMGFRQFVPVVAACPGCGRTTSTVFQELAQNIQNDLRKNMPVWRDKYPGVEALNVAVMGCIVNGPGESKHADIGISLPGTGESPAAPVFIDGQKAMTLRGPNIASDFEALVADYIEKRFGQKSVAAE</sequence>
<evidence type="ECO:0000255" key="1">
    <source>
        <dbReference type="HAMAP-Rule" id="MF_00159"/>
    </source>
</evidence>
<accession>B9JE02</accession>
<proteinExistence type="inferred from homology"/>
<dbReference type="EC" id="1.17.7.3" evidence="1"/>
<dbReference type="EMBL" id="CP000628">
    <property type="protein sequence ID" value="ACM28348.1"/>
    <property type="molecule type" value="Genomic_DNA"/>
</dbReference>
<dbReference type="RefSeq" id="WP_007692318.1">
    <property type="nucleotide sequence ID" value="NC_011985.1"/>
</dbReference>
<dbReference type="SMR" id="B9JE02"/>
<dbReference type="STRING" id="311403.Arad_4692"/>
<dbReference type="GeneID" id="86850220"/>
<dbReference type="KEGG" id="ara:Arad_4692"/>
<dbReference type="eggNOG" id="COG0821">
    <property type="taxonomic scope" value="Bacteria"/>
</dbReference>
<dbReference type="HOGENOM" id="CLU_042258_1_0_5"/>
<dbReference type="UniPathway" id="UPA00056">
    <property type="reaction ID" value="UER00096"/>
</dbReference>
<dbReference type="Proteomes" id="UP000001600">
    <property type="component" value="Chromosome 1"/>
</dbReference>
<dbReference type="GO" id="GO:0051539">
    <property type="term" value="F:4 iron, 4 sulfur cluster binding"/>
    <property type="evidence" value="ECO:0007669"/>
    <property type="project" value="UniProtKB-UniRule"/>
</dbReference>
<dbReference type="GO" id="GO:0046429">
    <property type="term" value="F:4-hydroxy-3-methylbut-2-en-1-yl diphosphate synthase activity (ferredoxin)"/>
    <property type="evidence" value="ECO:0007669"/>
    <property type="project" value="UniProtKB-UniRule"/>
</dbReference>
<dbReference type="GO" id="GO:0141197">
    <property type="term" value="F:4-hydroxy-3-methylbut-2-enyl-diphosphate synthase activity (flavodoxin)"/>
    <property type="evidence" value="ECO:0007669"/>
    <property type="project" value="UniProtKB-EC"/>
</dbReference>
<dbReference type="GO" id="GO:0005506">
    <property type="term" value="F:iron ion binding"/>
    <property type="evidence" value="ECO:0007669"/>
    <property type="project" value="InterPro"/>
</dbReference>
<dbReference type="GO" id="GO:0019288">
    <property type="term" value="P:isopentenyl diphosphate biosynthetic process, methylerythritol 4-phosphate pathway"/>
    <property type="evidence" value="ECO:0007669"/>
    <property type="project" value="UniProtKB-UniRule"/>
</dbReference>
<dbReference type="GO" id="GO:0016114">
    <property type="term" value="P:terpenoid biosynthetic process"/>
    <property type="evidence" value="ECO:0007669"/>
    <property type="project" value="InterPro"/>
</dbReference>
<dbReference type="FunFam" id="3.30.413.10:FF:000012">
    <property type="entry name" value="4-hydroxy-3-methylbut-2-en-1-yl diphosphate synthase (flavodoxin)"/>
    <property type="match status" value="1"/>
</dbReference>
<dbReference type="Gene3D" id="3.20.20.20">
    <property type="entry name" value="Dihydropteroate synthase-like"/>
    <property type="match status" value="1"/>
</dbReference>
<dbReference type="Gene3D" id="3.30.413.10">
    <property type="entry name" value="Sulfite Reductase Hemoprotein, domain 1"/>
    <property type="match status" value="1"/>
</dbReference>
<dbReference type="HAMAP" id="MF_00159">
    <property type="entry name" value="IspG"/>
    <property type="match status" value="1"/>
</dbReference>
<dbReference type="InterPro" id="IPR011005">
    <property type="entry name" value="Dihydropteroate_synth-like_sf"/>
</dbReference>
<dbReference type="InterPro" id="IPR016425">
    <property type="entry name" value="IspG_bac"/>
</dbReference>
<dbReference type="InterPro" id="IPR004588">
    <property type="entry name" value="IspG_bac-typ"/>
</dbReference>
<dbReference type="InterPro" id="IPR045854">
    <property type="entry name" value="NO2/SO3_Rdtase_4Fe4S_sf"/>
</dbReference>
<dbReference type="NCBIfam" id="TIGR00612">
    <property type="entry name" value="ispG_gcpE"/>
    <property type="match status" value="1"/>
</dbReference>
<dbReference type="NCBIfam" id="NF001540">
    <property type="entry name" value="PRK00366.1"/>
    <property type="match status" value="1"/>
</dbReference>
<dbReference type="PANTHER" id="PTHR30454">
    <property type="entry name" value="4-HYDROXY-3-METHYLBUT-2-EN-1-YL DIPHOSPHATE SYNTHASE"/>
    <property type="match status" value="1"/>
</dbReference>
<dbReference type="PANTHER" id="PTHR30454:SF0">
    <property type="entry name" value="4-HYDROXY-3-METHYLBUT-2-EN-1-YL DIPHOSPHATE SYNTHASE (FERREDOXIN), CHLOROPLASTIC"/>
    <property type="match status" value="1"/>
</dbReference>
<dbReference type="Pfam" id="PF04551">
    <property type="entry name" value="GcpE"/>
    <property type="match status" value="1"/>
</dbReference>
<dbReference type="PIRSF" id="PIRSF004640">
    <property type="entry name" value="IspG"/>
    <property type="match status" value="1"/>
</dbReference>
<dbReference type="SUPFAM" id="SSF56014">
    <property type="entry name" value="Nitrite and sulphite reductase 4Fe-4S domain-like"/>
    <property type="match status" value="1"/>
</dbReference>
<feature type="chain" id="PRO_1000123428" description="4-hydroxy-3-methylbut-2-en-1-yl diphosphate synthase (flavodoxin)">
    <location>
        <begin position="1"/>
        <end position="417"/>
    </location>
</feature>
<feature type="binding site" evidence="1">
    <location>
        <position position="304"/>
    </location>
    <ligand>
        <name>[4Fe-4S] cluster</name>
        <dbReference type="ChEBI" id="CHEBI:49883"/>
    </ligand>
</feature>
<feature type="binding site" evidence="1">
    <location>
        <position position="307"/>
    </location>
    <ligand>
        <name>[4Fe-4S] cluster</name>
        <dbReference type="ChEBI" id="CHEBI:49883"/>
    </ligand>
</feature>
<feature type="binding site" evidence="1">
    <location>
        <position position="350"/>
    </location>
    <ligand>
        <name>[4Fe-4S] cluster</name>
        <dbReference type="ChEBI" id="CHEBI:49883"/>
    </ligand>
</feature>
<feature type="binding site" evidence="1">
    <location>
        <position position="357"/>
    </location>
    <ligand>
        <name>[4Fe-4S] cluster</name>
        <dbReference type="ChEBI" id="CHEBI:49883"/>
    </ligand>
</feature>
<protein>
    <recommendedName>
        <fullName evidence="1">4-hydroxy-3-methylbut-2-en-1-yl diphosphate synthase (flavodoxin)</fullName>
        <ecNumber evidence="1">1.17.7.3</ecNumber>
    </recommendedName>
    <alternativeName>
        <fullName evidence="1">1-hydroxy-2-methyl-2-(E)-butenyl 4-diphosphate synthase</fullName>
    </alternativeName>
</protein>
<keyword id="KW-0004">4Fe-4S</keyword>
<keyword id="KW-0408">Iron</keyword>
<keyword id="KW-0411">Iron-sulfur</keyword>
<keyword id="KW-0414">Isoprene biosynthesis</keyword>
<keyword id="KW-0479">Metal-binding</keyword>
<keyword id="KW-0560">Oxidoreductase</keyword>